<dbReference type="EC" id="5.3.3.2" evidence="1"/>
<dbReference type="EMBL" id="AM263198">
    <property type="protein sequence ID" value="CAK20817.1"/>
    <property type="molecule type" value="Genomic_DNA"/>
</dbReference>
<dbReference type="RefSeq" id="WP_011702195.1">
    <property type="nucleotide sequence ID" value="NC_008555.1"/>
</dbReference>
<dbReference type="SMR" id="A0AII5"/>
<dbReference type="STRING" id="386043.lwe1399"/>
<dbReference type="GeneID" id="61189275"/>
<dbReference type="KEGG" id="lwe:lwe1399"/>
<dbReference type="eggNOG" id="COG1304">
    <property type="taxonomic scope" value="Bacteria"/>
</dbReference>
<dbReference type="HOGENOM" id="CLU_065515_0_0_9"/>
<dbReference type="OrthoDB" id="9795032at2"/>
<dbReference type="Proteomes" id="UP000000779">
    <property type="component" value="Chromosome"/>
</dbReference>
<dbReference type="GO" id="GO:0005737">
    <property type="term" value="C:cytoplasm"/>
    <property type="evidence" value="ECO:0007669"/>
    <property type="project" value="UniProtKB-SubCell"/>
</dbReference>
<dbReference type="GO" id="GO:0010181">
    <property type="term" value="F:FMN binding"/>
    <property type="evidence" value="ECO:0007669"/>
    <property type="project" value="UniProtKB-UniRule"/>
</dbReference>
<dbReference type="GO" id="GO:0004452">
    <property type="term" value="F:isopentenyl-diphosphate delta-isomerase activity"/>
    <property type="evidence" value="ECO:0007669"/>
    <property type="project" value="UniProtKB-UniRule"/>
</dbReference>
<dbReference type="GO" id="GO:0000287">
    <property type="term" value="F:magnesium ion binding"/>
    <property type="evidence" value="ECO:0007669"/>
    <property type="project" value="UniProtKB-UniRule"/>
</dbReference>
<dbReference type="GO" id="GO:0070402">
    <property type="term" value="F:NADPH binding"/>
    <property type="evidence" value="ECO:0007669"/>
    <property type="project" value="UniProtKB-UniRule"/>
</dbReference>
<dbReference type="GO" id="GO:0016491">
    <property type="term" value="F:oxidoreductase activity"/>
    <property type="evidence" value="ECO:0007669"/>
    <property type="project" value="InterPro"/>
</dbReference>
<dbReference type="GO" id="GO:0008299">
    <property type="term" value="P:isoprenoid biosynthetic process"/>
    <property type="evidence" value="ECO:0007669"/>
    <property type="project" value="UniProtKB-UniRule"/>
</dbReference>
<dbReference type="CDD" id="cd02811">
    <property type="entry name" value="IDI-2_FMN"/>
    <property type="match status" value="1"/>
</dbReference>
<dbReference type="Gene3D" id="3.20.20.70">
    <property type="entry name" value="Aldolase class I"/>
    <property type="match status" value="1"/>
</dbReference>
<dbReference type="HAMAP" id="MF_00354">
    <property type="entry name" value="Idi_2"/>
    <property type="match status" value="1"/>
</dbReference>
<dbReference type="InterPro" id="IPR013785">
    <property type="entry name" value="Aldolase_TIM"/>
</dbReference>
<dbReference type="InterPro" id="IPR000262">
    <property type="entry name" value="FMN-dep_DH"/>
</dbReference>
<dbReference type="InterPro" id="IPR011179">
    <property type="entry name" value="IPdP_isomerase"/>
</dbReference>
<dbReference type="NCBIfam" id="TIGR02151">
    <property type="entry name" value="IPP_isom_2"/>
    <property type="match status" value="1"/>
</dbReference>
<dbReference type="PANTHER" id="PTHR43665">
    <property type="entry name" value="ISOPENTENYL-DIPHOSPHATE DELTA-ISOMERASE"/>
    <property type="match status" value="1"/>
</dbReference>
<dbReference type="PANTHER" id="PTHR43665:SF1">
    <property type="entry name" value="ISOPENTENYL-DIPHOSPHATE DELTA-ISOMERASE"/>
    <property type="match status" value="1"/>
</dbReference>
<dbReference type="Pfam" id="PF01070">
    <property type="entry name" value="FMN_dh"/>
    <property type="match status" value="1"/>
</dbReference>
<dbReference type="PIRSF" id="PIRSF003314">
    <property type="entry name" value="IPP_isomerase"/>
    <property type="match status" value="1"/>
</dbReference>
<dbReference type="SUPFAM" id="SSF51395">
    <property type="entry name" value="FMN-linked oxidoreductases"/>
    <property type="match status" value="1"/>
</dbReference>
<protein>
    <recommendedName>
        <fullName evidence="1">Isopentenyl-diphosphate delta-isomerase</fullName>
        <shortName evidence="1">IPP isomerase</shortName>
        <ecNumber evidence="1">5.3.3.2</ecNumber>
    </recommendedName>
    <alternativeName>
        <fullName evidence="1">Isopentenyl diphosphate:dimethylallyl diphosphate isomerase</fullName>
    </alternativeName>
    <alternativeName>
        <fullName evidence="1">Isopentenyl pyrophosphate isomerase</fullName>
    </alternativeName>
    <alternativeName>
        <fullName evidence="1">Type 2 isopentenyl diphosphate isomerase</fullName>
        <shortName evidence="1">IDI-2</shortName>
    </alternativeName>
</protein>
<proteinExistence type="inferred from homology"/>
<accession>A0AII5</accession>
<evidence type="ECO:0000255" key="1">
    <source>
        <dbReference type="HAMAP-Rule" id="MF_00354"/>
    </source>
</evidence>
<organism>
    <name type="scientific">Listeria welshimeri serovar 6b (strain ATCC 35897 / DSM 20650 / CCUG 15529 / CIP 8149 / NCTC 11857 / SLCC 5334 / V8)</name>
    <dbReference type="NCBI Taxonomy" id="386043"/>
    <lineage>
        <taxon>Bacteria</taxon>
        <taxon>Bacillati</taxon>
        <taxon>Bacillota</taxon>
        <taxon>Bacilli</taxon>
        <taxon>Bacillales</taxon>
        <taxon>Listeriaceae</taxon>
        <taxon>Listeria</taxon>
    </lineage>
</organism>
<gene>
    <name evidence="1" type="primary">fni</name>
    <name type="ordered locus">lwe1399</name>
</gene>
<name>IDI2_LISW6</name>
<reference key="1">
    <citation type="journal article" date="2006" name="J. Bacteriol.">
        <title>Whole-genome sequence of Listeria welshimeri reveals common steps in genome reduction with Listeria innocua as compared to Listeria monocytogenes.</title>
        <authorList>
            <person name="Hain T."/>
            <person name="Steinweg C."/>
            <person name="Kuenne C.T."/>
            <person name="Billion A."/>
            <person name="Ghai R."/>
            <person name="Chatterjee S.S."/>
            <person name="Domann E."/>
            <person name="Kaerst U."/>
            <person name="Goesmann A."/>
            <person name="Bekel T."/>
            <person name="Bartels D."/>
            <person name="Kaiser O."/>
            <person name="Meyer F."/>
            <person name="Puehler A."/>
            <person name="Weisshaar B."/>
            <person name="Wehland J."/>
            <person name="Liang C."/>
            <person name="Dandekar T."/>
            <person name="Lampidis R."/>
            <person name="Kreft J."/>
            <person name="Goebel W."/>
            <person name="Chakraborty T."/>
        </authorList>
    </citation>
    <scope>NUCLEOTIDE SEQUENCE [LARGE SCALE GENOMIC DNA]</scope>
    <source>
        <strain>ATCC 35897 / DSM 20650 / CCUG 15529 / CIP 8149 / NCTC 11857 / SLCC 5334 / V8</strain>
    </source>
</reference>
<feature type="chain" id="PRO_1000048445" description="Isopentenyl-diphosphate delta-isomerase">
    <location>
        <begin position="1"/>
        <end position="358"/>
    </location>
</feature>
<feature type="binding site" evidence="1">
    <location>
        <begin position="12"/>
        <end position="13"/>
    </location>
    <ligand>
        <name>substrate</name>
    </ligand>
</feature>
<feature type="binding site" evidence="1">
    <location>
        <begin position="69"/>
        <end position="71"/>
    </location>
    <ligand>
        <name>FMN</name>
        <dbReference type="ChEBI" id="CHEBI:58210"/>
    </ligand>
</feature>
<feature type="binding site" evidence="1">
    <location>
        <position position="99"/>
    </location>
    <ligand>
        <name>FMN</name>
        <dbReference type="ChEBI" id="CHEBI:58210"/>
    </ligand>
</feature>
<feature type="binding site" evidence="1">
    <location>
        <position position="128"/>
    </location>
    <ligand>
        <name>FMN</name>
        <dbReference type="ChEBI" id="CHEBI:58210"/>
    </ligand>
</feature>
<feature type="binding site" evidence="1">
    <location>
        <position position="158"/>
    </location>
    <ligand>
        <name>substrate</name>
    </ligand>
</feature>
<feature type="binding site" evidence="1">
    <location>
        <position position="159"/>
    </location>
    <ligand>
        <name>Mg(2+)</name>
        <dbReference type="ChEBI" id="CHEBI:18420"/>
    </ligand>
</feature>
<feature type="binding site" evidence="1">
    <location>
        <position position="190"/>
    </location>
    <ligand>
        <name>FMN</name>
        <dbReference type="ChEBI" id="CHEBI:58210"/>
    </ligand>
</feature>
<feature type="binding site" evidence="1">
    <location>
        <position position="220"/>
    </location>
    <ligand>
        <name>FMN</name>
        <dbReference type="ChEBI" id="CHEBI:58210"/>
    </ligand>
</feature>
<feature type="binding site" evidence="1">
    <location>
        <begin position="267"/>
        <end position="269"/>
    </location>
    <ligand>
        <name>FMN</name>
        <dbReference type="ChEBI" id="CHEBI:58210"/>
    </ligand>
</feature>
<feature type="binding site" evidence="1">
    <location>
        <begin position="288"/>
        <end position="289"/>
    </location>
    <ligand>
        <name>FMN</name>
        <dbReference type="ChEBI" id="CHEBI:58210"/>
    </ligand>
</feature>
<comment type="function">
    <text evidence="1">Involved in the biosynthesis of isoprenoids. Catalyzes the 1,3-allylic rearrangement of the homoallylic substrate isopentenyl (IPP) to its allylic isomer, dimethylallyl diphosphate (DMAPP).</text>
</comment>
<comment type="catalytic activity">
    <reaction evidence="1">
        <text>isopentenyl diphosphate = dimethylallyl diphosphate</text>
        <dbReference type="Rhea" id="RHEA:23284"/>
        <dbReference type="ChEBI" id="CHEBI:57623"/>
        <dbReference type="ChEBI" id="CHEBI:128769"/>
        <dbReference type="EC" id="5.3.3.2"/>
    </reaction>
</comment>
<comment type="cofactor">
    <cofactor evidence="1">
        <name>FMN</name>
        <dbReference type="ChEBI" id="CHEBI:58210"/>
    </cofactor>
</comment>
<comment type="cofactor">
    <cofactor evidence="1">
        <name>NADPH</name>
        <dbReference type="ChEBI" id="CHEBI:57783"/>
    </cofactor>
</comment>
<comment type="cofactor">
    <cofactor evidence="1">
        <name>Mg(2+)</name>
        <dbReference type="ChEBI" id="CHEBI:18420"/>
    </cofactor>
</comment>
<comment type="subunit">
    <text evidence="1">Homooctamer. Dimer of tetramers.</text>
</comment>
<comment type="subcellular location">
    <subcellularLocation>
        <location evidence="1">Cytoplasm</location>
    </subcellularLocation>
</comment>
<comment type="similarity">
    <text evidence="1">Belongs to the IPP isomerase type 2 family.</text>
</comment>
<keyword id="KW-0963">Cytoplasm</keyword>
<keyword id="KW-0285">Flavoprotein</keyword>
<keyword id="KW-0288">FMN</keyword>
<keyword id="KW-0413">Isomerase</keyword>
<keyword id="KW-0414">Isoprene biosynthesis</keyword>
<keyword id="KW-0460">Magnesium</keyword>
<keyword id="KW-0479">Metal-binding</keyword>
<keyword id="KW-0521">NADP</keyword>
<sequence>MQKNDDLLRERRKDEHVALGVKQNEQLAPSSLDDIQLIGTSIPRYNVKDIDLTTTIFGVNVSLPFYINAMTGGSRHTKKINADLAEIAREVAIPMAVGSQSAALKNSSLMDTYQIVREVNPSGIIMANVSPEVAVQDGLRAIEMLEANALQIHINPAQELVMQEGDRSFSHWLARIEEYVKRSPVPIIVKEVGFGMTRETVKTLREVGVETVDLAGKGGTNFAQIENDRRRDQAYDFLLDWGISTGQSLIDMQHIDAPKIAYLASGGIRNPLDIVKSLALGADSVGMAGQIIYSLKKDGVSNTIEKLELWKEQLRGLFVLADAKNIAELKETSLIVNGKLAEWGNVRGIDLVQLANRK</sequence>